<proteinExistence type="inferred from homology"/>
<gene>
    <name type="primary">rocA2</name>
    <name type="ordered locus">BH3940</name>
</gene>
<feature type="chain" id="PRO_0000056508" description="1-pyrroline-5-carboxylate dehydrogenase 2">
    <location>
        <begin position="1"/>
        <end position="515"/>
    </location>
</feature>
<feature type="active site" evidence="1">
    <location>
        <position position="286"/>
    </location>
</feature>
<feature type="active site" evidence="1">
    <location>
        <position position="320"/>
    </location>
</feature>
<protein>
    <recommendedName>
        <fullName>1-pyrroline-5-carboxylate dehydrogenase 2</fullName>
        <shortName>P5C dehydrogenase 2</shortName>
        <ecNumber>1.2.1.88</ecNumber>
    </recommendedName>
    <alternativeName>
        <fullName>L-glutamate gamma-semialdehyde dehydrogenase</fullName>
    </alternativeName>
</protein>
<evidence type="ECO:0000250" key="1"/>
<evidence type="ECO:0000305" key="2"/>
<sequence>MLTPYKHEPFTDFSVEENRSAFEAALKNVEGELGKDYPLVINGERVTTDDKIVSVNPAMKEQVIGVVSKASREIVDDAFKSAETAFHTWKNVNPEERANILIRAAAIIRRRKHEFSAWLVKEAGKPWKEADADTAEAIDFLEYYARQMITLKDGKPVNSREGEHNRYFYTPIGVCVTISPWNFALAIMAGTTVAPIVTGNTVLLKPASTTPVVAAKFVEVLEEAGLPKGVVNFVPGSGTDIGDYLIDHPKTSLITFTGSRDVGVRLYERAAVVHPGQQHLKRVIVEMGGKDTVVVDKDADLDLAAQSIVTSAFGFSGQKCSAGSRAVIHQDVYDVVLEKAVALTKQLSVGEPTAPDVYMGPVVDQGAFSKIMSYIEVGKEEGRLMVGGEGDDSKGFFIQPTIFADVDPHARIMQEEIFGPVVAFSKARDFDHALEIANNTEYGLTGAVITTNRHHIEKAKRDFHVGNLYFNRNCTGAIVGYHPFGGFKMSGTDSKAGGPDYLALHMQAKTVSEMY</sequence>
<dbReference type="EC" id="1.2.1.88"/>
<dbReference type="EMBL" id="BA000004">
    <property type="protein sequence ID" value="BAB07659.1"/>
    <property type="molecule type" value="Genomic_DNA"/>
</dbReference>
<dbReference type="PIR" id="D84142">
    <property type="entry name" value="D84142"/>
</dbReference>
<dbReference type="RefSeq" id="WP_010900065.1">
    <property type="nucleotide sequence ID" value="NC_002570.2"/>
</dbReference>
<dbReference type="SMR" id="Q9K5Z5"/>
<dbReference type="STRING" id="272558.gene:10729853"/>
<dbReference type="GeneID" id="87599490"/>
<dbReference type="KEGG" id="bha:BH3940"/>
<dbReference type="eggNOG" id="COG1012">
    <property type="taxonomic scope" value="Bacteria"/>
</dbReference>
<dbReference type="HOGENOM" id="CLU_005391_0_0_9"/>
<dbReference type="OrthoDB" id="9762913at2"/>
<dbReference type="UniPathway" id="UPA00261">
    <property type="reaction ID" value="UER00374"/>
</dbReference>
<dbReference type="Proteomes" id="UP000001258">
    <property type="component" value="Chromosome"/>
</dbReference>
<dbReference type="GO" id="GO:0009898">
    <property type="term" value="C:cytoplasmic side of plasma membrane"/>
    <property type="evidence" value="ECO:0007669"/>
    <property type="project" value="TreeGrafter"/>
</dbReference>
<dbReference type="GO" id="GO:0003842">
    <property type="term" value="F:1-pyrroline-5-carboxylate dehydrogenase activity"/>
    <property type="evidence" value="ECO:0007669"/>
    <property type="project" value="UniProtKB-UniRule"/>
</dbReference>
<dbReference type="GO" id="GO:0006537">
    <property type="term" value="P:glutamate biosynthetic process"/>
    <property type="evidence" value="ECO:0007669"/>
    <property type="project" value="UniProtKB-UniRule"/>
</dbReference>
<dbReference type="GO" id="GO:0010133">
    <property type="term" value="P:proline catabolic process to glutamate"/>
    <property type="evidence" value="ECO:0007669"/>
    <property type="project" value="UniProtKB-UniPathway"/>
</dbReference>
<dbReference type="CDD" id="cd07124">
    <property type="entry name" value="ALDH_PutA-P5CDH-RocA"/>
    <property type="match status" value="1"/>
</dbReference>
<dbReference type="FunFam" id="3.40.309.10:FF:000005">
    <property type="entry name" value="1-pyrroline-5-carboxylate dehydrogenase 1"/>
    <property type="match status" value="1"/>
</dbReference>
<dbReference type="FunFam" id="3.40.605.10:FF:000045">
    <property type="entry name" value="1-pyrroline-5-carboxylate dehydrogenase 1"/>
    <property type="match status" value="1"/>
</dbReference>
<dbReference type="Gene3D" id="3.40.605.10">
    <property type="entry name" value="Aldehyde Dehydrogenase, Chain A, domain 1"/>
    <property type="match status" value="1"/>
</dbReference>
<dbReference type="Gene3D" id="3.40.309.10">
    <property type="entry name" value="Aldehyde Dehydrogenase, Chain A, domain 2"/>
    <property type="match status" value="1"/>
</dbReference>
<dbReference type="HAMAP" id="MF_00733">
    <property type="entry name" value="RocA"/>
    <property type="match status" value="1"/>
</dbReference>
<dbReference type="InterPro" id="IPR016161">
    <property type="entry name" value="Ald_DH/histidinol_DH"/>
</dbReference>
<dbReference type="InterPro" id="IPR016163">
    <property type="entry name" value="Ald_DH_C"/>
</dbReference>
<dbReference type="InterPro" id="IPR016160">
    <property type="entry name" value="Ald_DH_CS_CYS"/>
</dbReference>
<dbReference type="InterPro" id="IPR029510">
    <property type="entry name" value="Ald_DH_CS_GLU"/>
</dbReference>
<dbReference type="InterPro" id="IPR016162">
    <property type="entry name" value="Ald_DH_N"/>
</dbReference>
<dbReference type="InterPro" id="IPR015590">
    <property type="entry name" value="Aldehyde_DH_dom"/>
</dbReference>
<dbReference type="InterPro" id="IPR050485">
    <property type="entry name" value="Proline_metab_enzyme"/>
</dbReference>
<dbReference type="InterPro" id="IPR005932">
    <property type="entry name" value="RocA"/>
</dbReference>
<dbReference type="InterPro" id="IPR047597">
    <property type="entry name" value="RocA_bacillales"/>
</dbReference>
<dbReference type="NCBIfam" id="TIGR01237">
    <property type="entry name" value="D1pyr5carbox2"/>
    <property type="match status" value="1"/>
</dbReference>
<dbReference type="NCBIfam" id="NF002852">
    <property type="entry name" value="PRK03137.1"/>
    <property type="match status" value="1"/>
</dbReference>
<dbReference type="PANTHER" id="PTHR42862">
    <property type="entry name" value="DELTA-1-PYRROLINE-5-CARBOXYLATE DEHYDROGENASE 1, ISOFORM A-RELATED"/>
    <property type="match status" value="1"/>
</dbReference>
<dbReference type="PANTHER" id="PTHR42862:SF1">
    <property type="entry name" value="DELTA-1-PYRROLINE-5-CARBOXYLATE DEHYDROGENASE 2, ISOFORM A-RELATED"/>
    <property type="match status" value="1"/>
</dbReference>
<dbReference type="Pfam" id="PF00171">
    <property type="entry name" value="Aldedh"/>
    <property type="match status" value="1"/>
</dbReference>
<dbReference type="SUPFAM" id="SSF53720">
    <property type="entry name" value="ALDH-like"/>
    <property type="match status" value="1"/>
</dbReference>
<dbReference type="PROSITE" id="PS00070">
    <property type="entry name" value="ALDEHYDE_DEHYDR_CYS"/>
    <property type="match status" value="1"/>
</dbReference>
<dbReference type="PROSITE" id="PS00687">
    <property type="entry name" value="ALDEHYDE_DEHYDR_GLU"/>
    <property type="match status" value="1"/>
</dbReference>
<name>ROCA2_HALH5</name>
<accession>Q9K5Z5</accession>
<keyword id="KW-0520">NAD</keyword>
<keyword id="KW-0560">Oxidoreductase</keyword>
<keyword id="KW-1185">Reference proteome</keyword>
<reference key="1">
    <citation type="journal article" date="2000" name="Nucleic Acids Res.">
        <title>Complete genome sequence of the alkaliphilic bacterium Bacillus halodurans and genomic sequence comparison with Bacillus subtilis.</title>
        <authorList>
            <person name="Takami H."/>
            <person name="Nakasone K."/>
            <person name="Takaki Y."/>
            <person name="Maeno G."/>
            <person name="Sasaki R."/>
            <person name="Masui N."/>
            <person name="Fuji F."/>
            <person name="Hirama C."/>
            <person name="Nakamura Y."/>
            <person name="Ogasawara N."/>
            <person name="Kuhara S."/>
            <person name="Horikoshi K."/>
        </authorList>
    </citation>
    <scope>NUCLEOTIDE SEQUENCE [LARGE SCALE GENOMIC DNA]</scope>
    <source>
        <strain>ATCC BAA-125 / DSM 18197 / FERM 7344 / JCM 9153 / C-125</strain>
    </source>
</reference>
<comment type="catalytic activity">
    <reaction>
        <text>L-glutamate 5-semialdehyde + NAD(+) + H2O = L-glutamate + NADH + 2 H(+)</text>
        <dbReference type="Rhea" id="RHEA:30235"/>
        <dbReference type="ChEBI" id="CHEBI:15377"/>
        <dbReference type="ChEBI" id="CHEBI:15378"/>
        <dbReference type="ChEBI" id="CHEBI:29985"/>
        <dbReference type="ChEBI" id="CHEBI:57540"/>
        <dbReference type="ChEBI" id="CHEBI:57945"/>
        <dbReference type="ChEBI" id="CHEBI:58066"/>
        <dbReference type="EC" id="1.2.1.88"/>
    </reaction>
</comment>
<comment type="pathway">
    <text>Amino-acid degradation; L-proline degradation into L-glutamate; L-glutamate from L-proline: step 2/2.</text>
</comment>
<comment type="similarity">
    <text evidence="2">Belongs to the aldehyde dehydrogenase family. RocA subfamily.</text>
</comment>
<organism>
    <name type="scientific">Halalkalibacterium halodurans (strain ATCC BAA-125 / DSM 18197 / FERM 7344 / JCM 9153 / C-125)</name>
    <name type="common">Bacillus halodurans</name>
    <dbReference type="NCBI Taxonomy" id="272558"/>
    <lineage>
        <taxon>Bacteria</taxon>
        <taxon>Bacillati</taxon>
        <taxon>Bacillota</taxon>
        <taxon>Bacilli</taxon>
        <taxon>Bacillales</taxon>
        <taxon>Bacillaceae</taxon>
        <taxon>Halalkalibacterium (ex Joshi et al. 2022)</taxon>
    </lineage>
</organism>